<evidence type="ECO:0000250" key="1"/>
<evidence type="ECO:0000255" key="2">
    <source>
        <dbReference type="PROSITE-ProRule" id="PRU10095"/>
    </source>
</evidence>
<evidence type="ECO:0000269" key="3">
    <source>
    </source>
</evidence>
<evidence type="ECO:0000305" key="4"/>
<name>PRTA_DICCH</name>
<keyword id="KW-0106">Calcium</keyword>
<keyword id="KW-0903">Direct protein sequencing</keyword>
<keyword id="KW-0378">Hydrolase</keyword>
<keyword id="KW-0479">Metal-binding</keyword>
<keyword id="KW-0482">Metalloprotease</keyword>
<keyword id="KW-0645">Protease</keyword>
<keyword id="KW-0677">Repeat</keyword>
<keyword id="KW-0964">Secreted</keyword>
<keyword id="KW-0862">Zinc</keyword>
<keyword id="KW-0865">Zymogen</keyword>
<accession>Q07295</accession>
<dbReference type="EC" id="3.4.24.40"/>
<dbReference type="EMBL" id="X70011">
    <property type="protein sequence ID" value="CAA49611.1"/>
    <property type="molecule type" value="Genomic_DNA"/>
</dbReference>
<dbReference type="PIR" id="S30160">
    <property type="entry name" value="S30160"/>
</dbReference>
<dbReference type="SMR" id="Q07295"/>
<dbReference type="MEROPS" id="M10.052"/>
<dbReference type="GO" id="GO:0031012">
    <property type="term" value="C:extracellular matrix"/>
    <property type="evidence" value="ECO:0007669"/>
    <property type="project" value="InterPro"/>
</dbReference>
<dbReference type="GO" id="GO:0005615">
    <property type="term" value="C:extracellular space"/>
    <property type="evidence" value="ECO:0007669"/>
    <property type="project" value="InterPro"/>
</dbReference>
<dbReference type="GO" id="GO:0005509">
    <property type="term" value="F:calcium ion binding"/>
    <property type="evidence" value="ECO:0007669"/>
    <property type="project" value="InterPro"/>
</dbReference>
<dbReference type="GO" id="GO:0004222">
    <property type="term" value="F:metalloendopeptidase activity"/>
    <property type="evidence" value="ECO:0007669"/>
    <property type="project" value="InterPro"/>
</dbReference>
<dbReference type="GO" id="GO:0008270">
    <property type="term" value="F:zinc ion binding"/>
    <property type="evidence" value="ECO:0007669"/>
    <property type="project" value="InterPro"/>
</dbReference>
<dbReference type="GO" id="GO:0006508">
    <property type="term" value="P:proteolysis"/>
    <property type="evidence" value="ECO:0007669"/>
    <property type="project" value="UniProtKB-KW"/>
</dbReference>
<dbReference type="CDD" id="cd04277">
    <property type="entry name" value="ZnMc_serralysin_like"/>
    <property type="match status" value="1"/>
</dbReference>
<dbReference type="Gene3D" id="3.40.390.10">
    <property type="entry name" value="Collagenase (Catalytic Domain)"/>
    <property type="match status" value="1"/>
</dbReference>
<dbReference type="Gene3D" id="2.150.10.10">
    <property type="entry name" value="Serralysin-like metalloprotease, C-terminal"/>
    <property type="match status" value="1"/>
</dbReference>
<dbReference type="InterPro" id="IPR018511">
    <property type="entry name" value="Hemolysin-typ_Ca-bd_CS"/>
</dbReference>
<dbReference type="InterPro" id="IPR001343">
    <property type="entry name" value="Hemolysn_Ca-bd"/>
</dbReference>
<dbReference type="InterPro" id="IPR024079">
    <property type="entry name" value="MetalloPept_cat_dom_sf"/>
</dbReference>
<dbReference type="InterPro" id="IPR001818">
    <property type="entry name" value="Pept_M10_metallopeptidase"/>
</dbReference>
<dbReference type="InterPro" id="IPR016294">
    <property type="entry name" value="Pept_M10B"/>
</dbReference>
<dbReference type="InterPro" id="IPR013858">
    <property type="entry name" value="Peptidase_M10B_C"/>
</dbReference>
<dbReference type="InterPro" id="IPR006026">
    <property type="entry name" value="Peptidase_Metallo"/>
</dbReference>
<dbReference type="InterPro" id="IPR034033">
    <property type="entry name" value="Serralysin-like"/>
</dbReference>
<dbReference type="InterPro" id="IPR011049">
    <property type="entry name" value="Serralysin-like_metalloprot_C"/>
</dbReference>
<dbReference type="NCBIfam" id="NF035945">
    <property type="entry name" value="Zn_serralysin"/>
    <property type="match status" value="1"/>
</dbReference>
<dbReference type="PANTHER" id="PTHR10201">
    <property type="entry name" value="MATRIX METALLOPROTEINASE"/>
    <property type="match status" value="1"/>
</dbReference>
<dbReference type="PANTHER" id="PTHR10201:SF323">
    <property type="entry name" value="MATRIX METALLOPROTEINASE-21"/>
    <property type="match status" value="1"/>
</dbReference>
<dbReference type="Pfam" id="PF00353">
    <property type="entry name" value="HemolysinCabind"/>
    <property type="match status" value="1"/>
</dbReference>
<dbReference type="Pfam" id="PF00413">
    <property type="entry name" value="Peptidase_M10"/>
    <property type="match status" value="1"/>
</dbReference>
<dbReference type="Pfam" id="PF08548">
    <property type="entry name" value="Peptidase_M10_C"/>
    <property type="match status" value="1"/>
</dbReference>
<dbReference type="PIRSF" id="PIRSF001205">
    <property type="entry name" value="Peptidase_M10B"/>
    <property type="match status" value="1"/>
</dbReference>
<dbReference type="PRINTS" id="PR00313">
    <property type="entry name" value="CABNDNGRPT"/>
</dbReference>
<dbReference type="SMART" id="SM00235">
    <property type="entry name" value="ZnMc"/>
    <property type="match status" value="1"/>
</dbReference>
<dbReference type="SUPFAM" id="SSF51120">
    <property type="entry name" value="beta-Roll"/>
    <property type="match status" value="1"/>
</dbReference>
<dbReference type="SUPFAM" id="SSF55486">
    <property type="entry name" value="Metalloproteases ('zincins'), catalytic domain"/>
    <property type="match status" value="1"/>
</dbReference>
<dbReference type="PROSITE" id="PS00330">
    <property type="entry name" value="HEMOLYSIN_CALCIUM"/>
    <property type="match status" value="1"/>
</dbReference>
<dbReference type="PROSITE" id="PS00142">
    <property type="entry name" value="ZINC_PROTEASE"/>
    <property type="match status" value="1"/>
</dbReference>
<sequence>MEKNLSSRDDDALHSLSASSSYDSVYDLLHYHERGNGLTINGKPSYSIEDAGDQITRDNVSWNGSNVFGKSANLTFKFLQSARSTPDGDTGFVKFNAAQVAQAKLALQSWADLANITFTEVTGNQSANVTFGNYTRDSSGRLDYGTQAYAYLPGSGSASGTTWYNYNVDNIRSPDKMEYGRQTLTHEIGHALGLNHPGDYNAGEGNPTYREDTRQFSIMSYWSEKNTGGDFKGHYAAGPMLDDIDAIQRLYGANMTTRTGDTVYGFNSNTDRDFYTATSSSKALIFSVWDAGGKHTFDFSGYSNNQRINLNEGSLSDVGGLKGNVSIAHGVTIENAIGGSGNDLLIGNNADNILRGGAGDDILYGGGGADRLYGGSGRDTFVYTAVSDSKVAAPDWILDFQTGVDKIDLSALNTGNNLHFVNQFSGSGGEILLNWDSSASVSNLYLNLDNNTSPEFQVKIVGQVSQTADFVV</sequence>
<feature type="propeptide" id="PRO_0000028683" evidence="3">
    <location>
        <begin position="1"/>
        <end position="17"/>
    </location>
</feature>
<feature type="chain" id="PRO_0000028684" description="Serralysin A">
    <location>
        <begin position="18"/>
        <end position="472"/>
    </location>
</feature>
<feature type="repeat" description="Hemolysin-type calcium-binding 1">
    <location>
        <begin position="337"/>
        <end position="354"/>
    </location>
</feature>
<feature type="repeat" description="Hemolysin-type calcium-binding 2">
    <location>
        <begin position="355"/>
        <end position="372"/>
    </location>
</feature>
<feature type="active site" evidence="2">
    <location>
        <position position="187"/>
    </location>
</feature>
<feature type="binding site" evidence="2">
    <location>
        <position position="186"/>
    </location>
    <ligand>
        <name>Zn(2+)</name>
        <dbReference type="ChEBI" id="CHEBI:29105"/>
        <note>catalytic</note>
    </ligand>
</feature>
<feature type="binding site" evidence="2">
    <location>
        <position position="190"/>
    </location>
    <ligand>
        <name>Zn(2+)</name>
        <dbReference type="ChEBI" id="CHEBI:29105"/>
        <note>catalytic</note>
    </ligand>
</feature>
<feature type="binding site" evidence="2">
    <location>
        <position position="221"/>
    </location>
    <ligand>
        <name>Zn(2+)</name>
        <dbReference type="ChEBI" id="CHEBI:29105"/>
        <note>catalytic</note>
    </ligand>
</feature>
<feature type="binding site" evidence="1">
    <location>
        <position position="258"/>
    </location>
    <ligand>
        <name>Ca(2+)</name>
        <dbReference type="ChEBI" id="CHEBI:29108"/>
        <label>1</label>
    </ligand>
</feature>
<feature type="binding site" evidence="1">
    <location>
        <position position="260"/>
    </location>
    <ligand>
        <name>Ca(2+)</name>
        <dbReference type="ChEBI" id="CHEBI:29108"/>
        <label>1</label>
    </ligand>
</feature>
<feature type="binding site" evidence="1">
    <location>
        <position position="262"/>
    </location>
    <ligand>
        <name>Ca(2+)</name>
        <dbReference type="ChEBI" id="CHEBI:29108"/>
        <label>1</label>
    </ligand>
</feature>
<feature type="binding site" evidence="1">
    <location>
        <position position="290"/>
    </location>
    <ligand>
        <name>Ca(2+)</name>
        <dbReference type="ChEBI" id="CHEBI:29108"/>
        <label>1</label>
    </ligand>
</feature>
<feature type="binding site" evidence="1">
    <location>
        <position position="292"/>
    </location>
    <ligand>
        <name>Ca(2+)</name>
        <dbReference type="ChEBI" id="CHEBI:29108"/>
        <label>1</label>
    </ligand>
</feature>
<feature type="binding site" evidence="1">
    <location>
        <position position="293"/>
    </location>
    <ligand>
        <name>Ca(2+)</name>
        <dbReference type="ChEBI" id="CHEBI:29108"/>
        <label>2</label>
    </ligand>
</feature>
<feature type="binding site" evidence="1">
    <location>
        <position position="332"/>
    </location>
    <ligand>
        <name>Ca(2+)</name>
        <dbReference type="ChEBI" id="CHEBI:29108"/>
        <label>2</label>
    </ligand>
</feature>
<feature type="binding site" evidence="1">
    <location>
        <position position="334"/>
    </location>
    <ligand>
        <name>Ca(2+)</name>
        <dbReference type="ChEBI" id="CHEBI:29108"/>
        <label>2</label>
    </ligand>
</feature>
<feature type="binding site" evidence="1">
    <location>
        <position position="339"/>
    </location>
    <ligand>
        <name>Ca(2+)</name>
        <dbReference type="ChEBI" id="CHEBI:29108"/>
        <label>3</label>
    </ligand>
</feature>
<feature type="binding site" evidence="1">
    <location>
        <position position="341"/>
    </location>
    <ligand>
        <name>Ca(2+)</name>
        <dbReference type="ChEBI" id="CHEBI:29108"/>
        <label>3</label>
    </ligand>
</feature>
<feature type="binding site" evidence="1">
    <location>
        <position position="343"/>
    </location>
    <ligand>
        <name>Ca(2+)</name>
        <dbReference type="ChEBI" id="CHEBI:29108"/>
        <label>3</label>
    </ligand>
</feature>
<feature type="binding site" evidence="1">
    <location>
        <position position="348"/>
    </location>
    <ligand>
        <name>Ca(2+)</name>
        <dbReference type="ChEBI" id="CHEBI:29108"/>
        <label>4</label>
    </ligand>
</feature>
<feature type="binding site" evidence="1">
    <location>
        <position position="350"/>
    </location>
    <ligand>
        <name>Ca(2+)</name>
        <dbReference type="ChEBI" id="CHEBI:29108"/>
        <label>4</label>
    </ligand>
</feature>
<feature type="binding site" evidence="1">
    <location>
        <position position="352"/>
    </location>
    <ligand>
        <name>Ca(2+)</name>
        <dbReference type="ChEBI" id="CHEBI:29108"/>
        <label>4</label>
    </ligand>
</feature>
<feature type="binding site" evidence="1">
    <location>
        <position position="356"/>
    </location>
    <ligand>
        <name>Ca(2+)</name>
        <dbReference type="ChEBI" id="CHEBI:29108"/>
        <label>3</label>
    </ligand>
</feature>
<feature type="binding site" evidence="1">
    <location>
        <position position="357"/>
    </location>
    <ligand>
        <name>Ca(2+)</name>
        <dbReference type="ChEBI" id="CHEBI:29108"/>
        <label>5</label>
    </ligand>
</feature>
<feature type="binding site" evidence="1">
    <location>
        <position position="358"/>
    </location>
    <ligand>
        <name>Ca(2+)</name>
        <dbReference type="ChEBI" id="CHEBI:29108"/>
        <label>3</label>
    </ligand>
</feature>
<feature type="binding site" evidence="1">
    <location>
        <position position="359"/>
    </location>
    <ligand>
        <name>Ca(2+)</name>
        <dbReference type="ChEBI" id="CHEBI:29108"/>
        <label>5</label>
    </ligand>
</feature>
<feature type="binding site" evidence="1">
    <location>
        <position position="361"/>
    </location>
    <ligand>
        <name>Ca(2+)</name>
        <dbReference type="ChEBI" id="CHEBI:29108"/>
        <label>3</label>
    </ligand>
</feature>
<feature type="binding site" evidence="1">
    <location>
        <position position="361"/>
    </location>
    <ligand>
        <name>Ca(2+)</name>
        <dbReference type="ChEBI" id="CHEBI:29108"/>
        <label>5</label>
    </ligand>
</feature>
<feature type="binding site" evidence="1">
    <location>
        <position position="365"/>
    </location>
    <ligand>
        <name>Ca(2+)</name>
        <dbReference type="ChEBI" id="CHEBI:29108"/>
        <label>4</label>
    </ligand>
</feature>
<feature type="binding site" evidence="1">
    <location>
        <position position="366"/>
    </location>
    <ligand>
        <name>Ca(2+)</name>
        <dbReference type="ChEBI" id="CHEBI:29108"/>
        <label>6</label>
    </ligand>
</feature>
<feature type="binding site" evidence="1">
    <location>
        <position position="367"/>
    </location>
    <ligand>
        <name>Ca(2+)</name>
        <dbReference type="ChEBI" id="CHEBI:29108"/>
        <label>4</label>
    </ligand>
</feature>
<feature type="binding site" evidence="1">
    <location>
        <position position="368"/>
    </location>
    <ligand>
        <name>Ca(2+)</name>
        <dbReference type="ChEBI" id="CHEBI:29108"/>
        <label>6</label>
    </ligand>
</feature>
<feature type="binding site" evidence="1">
    <location>
        <position position="370"/>
    </location>
    <ligand>
        <name>Ca(2+)</name>
        <dbReference type="ChEBI" id="CHEBI:29108"/>
        <label>4</label>
    </ligand>
</feature>
<feature type="binding site" evidence="1">
    <location>
        <position position="370"/>
    </location>
    <ligand>
        <name>Ca(2+)</name>
        <dbReference type="ChEBI" id="CHEBI:29108"/>
        <label>6</label>
    </ligand>
</feature>
<feature type="binding site" evidence="1">
    <location>
        <position position="374"/>
    </location>
    <ligand>
        <name>Ca(2+)</name>
        <dbReference type="ChEBI" id="CHEBI:29108"/>
        <label>5</label>
    </ligand>
</feature>
<feature type="binding site" evidence="1">
    <location>
        <position position="375"/>
    </location>
    <ligand>
        <name>Ca(2+)</name>
        <dbReference type="ChEBI" id="CHEBI:29108"/>
        <label>7</label>
    </ligand>
</feature>
<feature type="binding site" evidence="1">
    <location>
        <position position="377"/>
    </location>
    <ligand>
        <name>Ca(2+)</name>
        <dbReference type="ChEBI" id="CHEBI:29108"/>
        <label>7</label>
    </ligand>
</feature>
<feature type="binding site" evidence="1">
    <location>
        <position position="379"/>
    </location>
    <ligand>
        <name>Ca(2+)</name>
        <dbReference type="ChEBI" id="CHEBI:29108"/>
        <label>5</label>
    </ligand>
</feature>
<feature type="binding site" evidence="1">
    <location>
        <position position="379"/>
    </location>
    <ligand>
        <name>Ca(2+)</name>
        <dbReference type="ChEBI" id="CHEBI:29108"/>
        <label>7</label>
    </ligand>
</feature>
<feature type="binding site" evidence="1">
    <location>
        <position position="388"/>
    </location>
    <ligand>
        <name>Ca(2+)</name>
        <dbReference type="ChEBI" id="CHEBI:29108"/>
        <label>6</label>
    </ligand>
</feature>
<feature type="binding site" evidence="1">
    <location>
        <position position="395"/>
    </location>
    <ligand>
        <name>Ca(2+)</name>
        <dbReference type="ChEBI" id="CHEBI:29108"/>
        <label>6</label>
    </ligand>
</feature>
<feature type="binding site" evidence="1">
    <location>
        <position position="405"/>
    </location>
    <ligand>
        <name>Ca(2+)</name>
        <dbReference type="ChEBI" id="CHEBI:29108"/>
        <label>7</label>
    </ligand>
</feature>
<organism>
    <name type="scientific">Dickeya chrysanthemi</name>
    <name type="common">Pectobacterium chrysanthemi</name>
    <name type="synonym">Erwinia chrysanthemi</name>
    <dbReference type="NCBI Taxonomy" id="556"/>
    <lineage>
        <taxon>Bacteria</taxon>
        <taxon>Pseudomonadati</taxon>
        <taxon>Pseudomonadota</taxon>
        <taxon>Gammaproteobacteria</taxon>
        <taxon>Enterobacterales</taxon>
        <taxon>Pectobacteriaceae</taxon>
        <taxon>Dickeya</taxon>
    </lineage>
</organism>
<protein>
    <recommendedName>
        <fullName>Serralysin A</fullName>
        <ecNumber>3.4.24.40</ecNumber>
    </recommendedName>
    <alternativeName>
        <fullName>Secreted protease A</fullName>
        <shortName>ProA</shortName>
    </alternativeName>
</protein>
<gene>
    <name type="primary">prtA</name>
</gene>
<comment type="catalytic activity">
    <reaction>
        <text>Preferential cleavage of bonds with hydrophobic residues in P1'.</text>
        <dbReference type="EC" id="3.4.24.40"/>
    </reaction>
</comment>
<comment type="cofactor">
    <cofactor evidence="1">
        <name>Ca(2+)</name>
        <dbReference type="ChEBI" id="CHEBI:29108"/>
    </cofactor>
    <text evidence="1">Binds 7 Ca(2+) ions per subunit.</text>
</comment>
<comment type="cofactor">
    <cofactor evidence="1">
        <name>Zn(2+)</name>
        <dbReference type="ChEBI" id="CHEBI:29105"/>
    </cofactor>
    <text evidence="1">Binds 1 zinc ion per subunit.</text>
</comment>
<comment type="subcellular location">
    <subcellularLocation>
        <location>Secreted</location>
    </subcellularLocation>
</comment>
<comment type="domain">
    <text>The Gly-rich repeats may be important in the extracellular secretion of this metalloprotease.</text>
</comment>
<comment type="miscellaneous">
    <text>Could be the homolog of prtC from strain EC16.</text>
</comment>
<comment type="similarity">
    <text evidence="4">Belongs to the peptidase M10B family.</text>
</comment>
<proteinExistence type="evidence at protein level"/>
<reference key="1">
    <citation type="journal article" date="1992" name="Mol. Gen. Genet.">
        <title>Cloning, nucleotide sequence and characterization of the gene encoding the Erwinia chrysanthemi B374 PrtA metalloprotease: a third metalloprotease secreted via a C-terminal secretion signal.</title>
        <authorList>
            <person name="Ghigo J.-M."/>
            <person name="Wandersman C."/>
        </authorList>
    </citation>
    <scope>NUCLEOTIDE SEQUENCE [GENOMIC DNA]</scope>
    <scope>PROTEIN SEQUENCE OF 18-22</scope>
    <source>
        <strain>B374</strain>
    </source>
</reference>